<evidence type="ECO:0000255" key="1">
    <source>
        <dbReference type="HAMAP-Rule" id="MF_00365"/>
    </source>
</evidence>
<proteinExistence type="inferred from homology"/>
<name>RECF_LEPBP</name>
<reference key="1">
    <citation type="journal article" date="2008" name="PLoS ONE">
        <title>Genome sequence of the saprophyte Leptospira biflexa provides insights into the evolution of Leptospira and the pathogenesis of leptospirosis.</title>
        <authorList>
            <person name="Picardeau M."/>
            <person name="Bulach D.M."/>
            <person name="Bouchier C."/>
            <person name="Zuerner R.L."/>
            <person name="Zidane N."/>
            <person name="Wilson P.J."/>
            <person name="Creno S."/>
            <person name="Kuczek E.S."/>
            <person name="Bommezzadri S."/>
            <person name="Davis J.C."/>
            <person name="McGrath A."/>
            <person name="Johnson M.J."/>
            <person name="Boursaux-Eude C."/>
            <person name="Seemann T."/>
            <person name="Rouy Z."/>
            <person name="Coppel R.L."/>
            <person name="Rood J.I."/>
            <person name="Lajus A."/>
            <person name="Davies J.K."/>
            <person name="Medigue C."/>
            <person name="Adler B."/>
        </authorList>
    </citation>
    <scope>NUCLEOTIDE SEQUENCE [LARGE SCALE GENOMIC DNA]</scope>
    <source>
        <strain>Patoc 1 / ATCC 23582 / Paris</strain>
    </source>
</reference>
<organism>
    <name type="scientific">Leptospira biflexa serovar Patoc (strain Patoc 1 / ATCC 23582 / Paris)</name>
    <dbReference type="NCBI Taxonomy" id="456481"/>
    <lineage>
        <taxon>Bacteria</taxon>
        <taxon>Pseudomonadati</taxon>
        <taxon>Spirochaetota</taxon>
        <taxon>Spirochaetia</taxon>
        <taxon>Leptospirales</taxon>
        <taxon>Leptospiraceae</taxon>
        <taxon>Leptospira</taxon>
    </lineage>
</organism>
<keyword id="KW-0067">ATP-binding</keyword>
<keyword id="KW-0963">Cytoplasm</keyword>
<keyword id="KW-0227">DNA damage</keyword>
<keyword id="KW-0234">DNA repair</keyword>
<keyword id="KW-0235">DNA replication</keyword>
<keyword id="KW-0238">DNA-binding</keyword>
<keyword id="KW-0547">Nucleotide-binding</keyword>
<keyword id="KW-1185">Reference proteome</keyword>
<keyword id="KW-0742">SOS response</keyword>
<sequence>MFLKKIYIKNFRNHEETQLTFKSRLVFFIGNNGEGKTNLLESISLLSYLKSFRESDQNQLLRWDTSDTFIRAEFESEGNEYLFEYGIEHSQTKRKKLKVNGEEFKKISDYVGYFRSIVMSPPDILIIEDGNVERRRFLDAFISSTNRYYLKQLIEYERLIKQRNAALKKENASDREIGIWDEPIIEHDSEIREIRTKTIQSLAGYFHQNLLQLSSGKDPYFLTYKPNITSKEEHKQKLIDNLRKDKAIGYTSCGNHRDTLPIGFDDKDLSGFGSQGQKRSAVIALKTACFQMIRDTTGEAPVLLIDDIIRELDVKRREYFVNLISECGQAFFTTTDLEGINEYVGNLTVDKEIYIIDSGKVKVFTEI</sequence>
<comment type="function">
    <text evidence="1">The RecF protein is involved in DNA metabolism; it is required for DNA replication and normal SOS inducibility. RecF binds preferentially to single-stranded, linear DNA. It also seems to bind ATP.</text>
</comment>
<comment type="subcellular location">
    <subcellularLocation>
        <location evidence="1">Cytoplasm</location>
    </subcellularLocation>
</comment>
<comment type="similarity">
    <text evidence="1">Belongs to the RecF family.</text>
</comment>
<accession>B0SK33</accession>
<dbReference type="EMBL" id="CP000786">
    <property type="protein sequence ID" value="ABZ96150.1"/>
    <property type="molecule type" value="Genomic_DNA"/>
</dbReference>
<dbReference type="RefSeq" id="WP_012387041.1">
    <property type="nucleotide sequence ID" value="NC_010602.1"/>
</dbReference>
<dbReference type="SMR" id="B0SK33"/>
<dbReference type="STRING" id="456481.LEPBI_I0003"/>
<dbReference type="KEGG" id="lbi:LEPBI_I0003"/>
<dbReference type="HOGENOM" id="CLU_040267_0_1_12"/>
<dbReference type="OrthoDB" id="9803889at2"/>
<dbReference type="BioCyc" id="LBIF456481:LEPBI_RS00030-MONOMER"/>
<dbReference type="Proteomes" id="UP000001847">
    <property type="component" value="Chromosome I"/>
</dbReference>
<dbReference type="GO" id="GO:0005737">
    <property type="term" value="C:cytoplasm"/>
    <property type="evidence" value="ECO:0007669"/>
    <property type="project" value="UniProtKB-SubCell"/>
</dbReference>
<dbReference type="GO" id="GO:0005524">
    <property type="term" value="F:ATP binding"/>
    <property type="evidence" value="ECO:0007669"/>
    <property type="project" value="UniProtKB-UniRule"/>
</dbReference>
<dbReference type="GO" id="GO:0003697">
    <property type="term" value="F:single-stranded DNA binding"/>
    <property type="evidence" value="ECO:0007669"/>
    <property type="project" value="UniProtKB-UniRule"/>
</dbReference>
<dbReference type="GO" id="GO:0006260">
    <property type="term" value="P:DNA replication"/>
    <property type="evidence" value="ECO:0007669"/>
    <property type="project" value="UniProtKB-UniRule"/>
</dbReference>
<dbReference type="GO" id="GO:0000731">
    <property type="term" value="P:DNA synthesis involved in DNA repair"/>
    <property type="evidence" value="ECO:0007669"/>
    <property type="project" value="TreeGrafter"/>
</dbReference>
<dbReference type="GO" id="GO:0006302">
    <property type="term" value="P:double-strand break repair"/>
    <property type="evidence" value="ECO:0007669"/>
    <property type="project" value="TreeGrafter"/>
</dbReference>
<dbReference type="GO" id="GO:0009432">
    <property type="term" value="P:SOS response"/>
    <property type="evidence" value="ECO:0007669"/>
    <property type="project" value="UniProtKB-UniRule"/>
</dbReference>
<dbReference type="Gene3D" id="3.40.50.300">
    <property type="entry name" value="P-loop containing nucleotide triphosphate hydrolases"/>
    <property type="match status" value="1"/>
</dbReference>
<dbReference type="Gene3D" id="1.20.1050.90">
    <property type="entry name" value="RecF/RecN/SMC, N-terminal domain"/>
    <property type="match status" value="1"/>
</dbReference>
<dbReference type="HAMAP" id="MF_00365">
    <property type="entry name" value="RecF"/>
    <property type="match status" value="1"/>
</dbReference>
<dbReference type="InterPro" id="IPR001238">
    <property type="entry name" value="DNA-binding_RecF"/>
</dbReference>
<dbReference type="InterPro" id="IPR018078">
    <property type="entry name" value="DNA-binding_RecF_CS"/>
</dbReference>
<dbReference type="InterPro" id="IPR027417">
    <property type="entry name" value="P-loop_NTPase"/>
</dbReference>
<dbReference type="InterPro" id="IPR003395">
    <property type="entry name" value="RecF/RecN/SMC_N"/>
</dbReference>
<dbReference type="InterPro" id="IPR042174">
    <property type="entry name" value="RecF_2"/>
</dbReference>
<dbReference type="NCBIfam" id="TIGR00611">
    <property type="entry name" value="recf"/>
    <property type="match status" value="1"/>
</dbReference>
<dbReference type="PANTHER" id="PTHR32182">
    <property type="entry name" value="DNA REPLICATION AND REPAIR PROTEIN RECF"/>
    <property type="match status" value="1"/>
</dbReference>
<dbReference type="PANTHER" id="PTHR32182:SF0">
    <property type="entry name" value="DNA REPLICATION AND REPAIR PROTEIN RECF"/>
    <property type="match status" value="1"/>
</dbReference>
<dbReference type="Pfam" id="PF02463">
    <property type="entry name" value="SMC_N"/>
    <property type="match status" value="1"/>
</dbReference>
<dbReference type="SUPFAM" id="SSF52540">
    <property type="entry name" value="P-loop containing nucleoside triphosphate hydrolases"/>
    <property type="match status" value="1"/>
</dbReference>
<dbReference type="PROSITE" id="PS00618">
    <property type="entry name" value="RECF_2"/>
    <property type="match status" value="1"/>
</dbReference>
<protein>
    <recommendedName>
        <fullName evidence="1">DNA replication and repair protein RecF</fullName>
    </recommendedName>
</protein>
<feature type="chain" id="PRO_1000121130" description="DNA replication and repair protein RecF">
    <location>
        <begin position="1"/>
        <end position="367"/>
    </location>
</feature>
<feature type="binding site" evidence="1">
    <location>
        <begin position="30"/>
        <end position="37"/>
    </location>
    <ligand>
        <name>ATP</name>
        <dbReference type="ChEBI" id="CHEBI:30616"/>
    </ligand>
</feature>
<gene>
    <name evidence="1" type="primary">recF</name>
    <name type="ordered locus">LEPBI_I0003</name>
</gene>